<feature type="chain" id="PRO_0000334844" description="Leucine--tRNA ligase">
    <location>
        <begin position="1"/>
        <end position="955"/>
    </location>
</feature>
<feature type="short sequence motif" description="'HIGH' region">
    <location>
        <begin position="51"/>
        <end position="61"/>
    </location>
</feature>
<feature type="short sequence motif" description="'KMSKS' region">
    <location>
        <begin position="647"/>
        <end position="651"/>
    </location>
</feature>
<feature type="binding site" evidence="1">
    <location>
        <position position="650"/>
    </location>
    <ligand>
        <name>ATP</name>
        <dbReference type="ChEBI" id="CHEBI:30616"/>
    </ligand>
</feature>
<comment type="catalytic activity">
    <reaction evidence="1">
        <text>tRNA(Leu) + L-leucine + ATP = L-leucyl-tRNA(Leu) + AMP + diphosphate</text>
        <dbReference type="Rhea" id="RHEA:11688"/>
        <dbReference type="Rhea" id="RHEA-COMP:9613"/>
        <dbReference type="Rhea" id="RHEA-COMP:9622"/>
        <dbReference type="ChEBI" id="CHEBI:30616"/>
        <dbReference type="ChEBI" id="CHEBI:33019"/>
        <dbReference type="ChEBI" id="CHEBI:57427"/>
        <dbReference type="ChEBI" id="CHEBI:78442"/>
        <dbReference type="ChEBI" id="CHEBI:78494"/>
        <dbReference type="ChEBI" id="CHEBI:456215"/>
        <dbReference type="EC" id="6.1.1.4"/>
    </reaction>
</comment>
<comment type="subcellular location">
    <subcellularLocation>
        <location evidence="1">Cytoplasm</location>
    </subcellularLocation>
</comment>
<comment type="similarity">
    <text evidence="1">Belongs to the class-I aminoacyl-tRNA synthetase family.</text>
</comment>
<protein>
    <recommendedName>
        <fullName evidence="1">Leucine--tRNA ligase</fullName>
        <ecNumber evidence="1">6.1.1.4</ecNumber>
    </recommendedName>
    <alternativeName>
        <fullName evidence="1">Leucyl-tRNA synthetase</fullName>
        <shortName evidence="1">LeuRS</shortName>
    </alternativeName>
</protein>
<organism>
    <name type="scientific">Methanococcus maripaludis (strain C5 / ATCC BAA-1333)</name>
    <dbReference type="NCBI Taxonomy" id="402880"/>
    <lineage>
        <taxon>Archaea</taxon>
        <taxon>Methanobacteriati</taxon>
        <taxon>Methanobacteriota</taxon>
        <taxon>Methanomada group</taxon>
        <taxon>Methanococci</taxon>
        <taxon>Methanococcales</taxon>
        <taxon>Methanococcaceae</taxon>
        <taxon>Methanococcus</taxon>
    </lineage>
</organism>
<name>SYL_METM5</name>
<gene>
    <name evidence="1" type="primary">leuS</name>
    <name type="ordered locus">MmarC5_0879</name>
</gene>
<accession>A4FYA3</accession>
<evidence type="ECO:0000255" key="1">
    <source>
        <dbReference type="HAMAP-Rule" id="MF_00049"/>
    </source>
</evidence>
<proteinExistence type="inferred from homology"/>
<dbReference type="EC" id="6.1.1.4" evidence="1"/>
<dbReference type="EMBL" id="CP000609">
    <property type="protein sequence ID" value="ABO35187.1"/>
    <property type="molecule type" value="Genomic_DNA"/>
</dbReference>
<dbReference type="RefSeq" id="WP_011868641.1">
    <property type="nucleotide sequence ID" value="NC_009135.1"/>
</dbReference>
<dbReference type="SMR" id="A4FYA3"/>
<dbReference type="STRING" id="402880.MmarC5_0879"/>
<dbReference type="GeneID" id="4929284"/>
<dbReference type="KEGG" id="mmq:MmarC5_0879"/>
<dbReference type="eggNOG" id="arCOG00809">
    <property type="taxonomic scope" value="Archaea"/>
</dbReference>
<dbReference type="HOGENOM" id="CLU_004174_0_0_2"/>
<dbReference type="OrthoDB" id="23906at2157"/>
<dbReference type="Proteomes" id="UP000000253">
    <property type="component" value="Chromosome"/>
</dbReference>
<dbReference type="GO" id="GO:0005737">
    <property type="term" value="C:cytoplasm"/>
    <property type="evidence" value="ECO:0007669"/>
    <property type="project" value="UniProtKB-SubCell"/>
</dbReference>
<dbReference type="GO" id="GO:0002161">
    <property type="term" value="F:aminoacyl-tRNA deacylase activity"/>
    <property type="evidence" value="ECO:0007669"/>
    <property type="project" value="InterPro"/>
</dbReference>
<dbReference type="GO" id="GO:0005524">
    <property type="term" value="F:ATP binding"/>
    <property type="evidence" value="ECO:0007669"/>
    <property type="project" value="UniProtKB-UniRule"/>
</dbReference>
<dbReference type="GO" id="GO:0004823">
    <property type="term" value="F:leucine-tRNA ligase activity"/>
    <property type="evidence" value="ECO:0007669"/>
    <property type="project" value="UniProtKB-UniRule"/>
</dbReference>
<dbReference type="GO" id="GO:0006429">
    <property type="term" value="P:leucyl-tRNA aminoacylation"/>
    <property type="evidence" value="ECO:0007669"/>
    <property type="project" value="UniProtKB-UniRule"/>
</dbReference>
<dbReference type="CDD" id="cd07959">
    <property type="entry name" value="Anticodon_Ia_Leu_AEc"/>
    <property type="match status" value="1"/>
</dbReference>
<dbReference type="FunFam" id="1.10.730.10:FF:000051">
    <property type="entry name" value="Leucine--tRNA ligase"/>
    <property type="match status" value="1"/>
</dbReference>
<dbReference type="Gene3D" id="3.30.2320.20">
    <property type="entry name" value="Class I aminoacyl-tRNA synthetases (RS)"/>
    <property type="match status" value="1"/>
</dbReference>
<dbReference type="Gene3D" id="3.40.50.620">
    <property type="entry name" value="HUPs"/>
    <property type="match status" value="1"/>
</dbReference>
<dbReference type="Gene3D" id="1.10.730.10">
    <property type="entry name" value="Isoleucyl-tRNA Synthetase, Domain 1"/>
    <property type="match status" value="1"/>
</dbReference>
<dbReference type="Gene3D" id="1.10.10.720">
    <property type="entry name" value="leucyl-tRNA synthetase"/>
    <property type="match status" value="1"/>
</dbReference>
<dbReference type="Gene3D" id="3.90.740.10">
    <property type="entry name" value="Valyl/Leucyl/Isoleucyl-tRNA synthetase, editing domain"/>
    <property type="match status" value="1"/>
</dbReference>
<dbReference type="HAMAP" id="MF_00049_A">
    <property type="entry name" value="Leu_tRNA_synth_A"/>
    <property type="match status" value="1"/>
</dbReference>
<dbReference type="InterPro" id="IPR001412">
    <property type="entry name" value="aa-tRNA-synth_I_CS"/>
</dbReference>
<dbReference type="InterPro" id="IPR002300">
    <property type="entry name" value="aa-tRNA-synth_Ia"/>
</dbReference>
<dbReference type="InterPro" id="IPR020791">
    <property type="entry name" value="Leu-tRNA-lgase_arc"/>
</dbReference>
<dbReference type="InterPro" id="IPR004493">
    <property type="entry name" value="Leu-tRNA-synth_Ia_arc/euk"/>
</dbReference>
<dbReference type="InterPro" id="IPR013155">
    <property type="entry name" value="M/V/L/I-tRNA-synth_anticd-bd"/>
</dbReference>
<dbReference type="InterPro" id="IPR014729">
    <property type="entry name" value="Rossmann-like_a/b/a_fold"/>
</dbReference>
<dbReference type="InterPro" id="IPR009080">
    <property type="entry name" value="tRNAsynth_Ia_anticodon-bd"/>
</dbReference>
<dbReference type="InterPro" id="IPR009008">
    <property type="entry name" value="Val/Leu/Ile-tRNA-synth_edit"/>
</dbReference>
<dbReference type="NCBIfam" id="TIGR00395">
    <property type="entry name" value="leuS_arch"/>
    <property type="match status" value="1"/>
</dbReference>
<dbReference type="NCBIfam" id="NF008957">
    <property type="entry name" value="PRK12300.1"/>
    <property type="match status" value="1"/>
</dbReference>
<dbReference type="PANTHER" id="PTHR45794:SF1">
    <property type="entry name" value="LEUCINE--TRNA LIGASE, CYTOPLASMIC"/>
    <property type="match status" value="1"/>
</dbReference>
<dbReference type="PANTHER" id="PTHR45794">
    <property type="entry name" value="LEUCYL-TRNA SYNTHETASE"/>
    <property type="match status" value="1"/>
</dbReference>
<dbReference type="Pfam" id="PF08264">
    <property type="entry name" value="Anticodon_1"/>
    <property type="match status" value="1"/>
</dbReference>
<dbReference type="Pfam" id="PF00133">
    <property type="entry name" value="tRNA-synt_1"/>
    <property type="match status" value="1"/>
</dbReference>
<dbReference type="SUPFAM" id="SSF47323">
    <property type="entry name" value="Anticodon-binding domain of a subclass of class I aminoacyl-tRNA synthetases"/>
    <property type="match status" value="1"/>
</dbReference>
<dbReference type="SUPFAM" id="SSF52374">
    <property type="entry name" value="Nucleotidylyl transferase"/>
    <property type="match status" value="1"/>
</dbReference>
<dbReference type="SUPFAM" id="SSF50677">
    <property type="entry name" value="ValRS/IleRS/LeuRS editing domain"/>
    <property type="match status" value="1"/>
</dbReference>
<dbReference type="PROSITE" id="PS00178">
    <property type="entry name" value="AA_TRNA_LIGASE_I"/>
    <property type="match status" value="1"/>
</dbReference>
<keyword id="KW-0030">Aminoacyl-tRNA synthetase</keyword>
<keyword id="KW-0067">ATP-binding</keyword>
<keyword id="KW-0963">Cytoplasm</keyword>
<keyword id="KW-0436">Ligase</keyword>
<keyword id="KW-0547">Nucleotide-binding</keyword>
<keyword id="KW-0648">Protein biosynthesis</keyword>
<reference key="1">
    <citation type="submission" date="2007-03" db="EMBL/GenBank/DDBJ databases">
        <title>Complete sequence of chromosome of Methanococcus maripaludis C5.</title>
        <authorList>
            <consortium name="US DOE Joint Genome Institute"/>
            <person name="Copeland A."/>
            <person name="Lucas S."/>
            <person name="Lapidus A."/>
            <person name="Barry K."/>
            <person name="Glavina del Rio T."/>
            <person name="Dalin E."/>
            <person name="Tice H."/>
            <person name="Pitluck S."/>
            <person name="Chertkov O."/>
            <person name="Brettin T."/>
            <person name="Bruce D."/>
            <person name="Han C."/>
            <person name="Detter J.C."/>
            <person name="Schmutz J."/>
            <person name="Larimer F."/>
            <person name="Land M."/>
            <person name="Hauser L."/>
            <person name="Kyrpides N."/>
            <person name="Mikhailova N."/>
            <person name="Sieprawska-Lupa M."/>
            <person name="Whitman W.B."/>
            <person name="Richardson P."/>
        </authorList>
    </citation>
    <scope>NUCLEOTIDE SEQUENCE [LARGE SCALE GENOMIC DNA]</scope>
    <source>
        <strain>C5 / ATCC BAA-1333</strain>
    </source>
</reference>
<sequence length="955" mass="110927">MDQNGVNEGTGHKSVDLIQIMDKWQKKWTEAKIFEAEHDLRDKFFITAAFPYLNGVLHAGHLRTFTIPETIARYQRMKNKNVLWTFGFHVTGTPILGLANQIKDRKEDIIWAYNNLHNIPMDELLKLKTPEAIVECFSKKATEAFKRMGFSLDWRRNFKTDDKVFSKFIEWQFYKLKEMGHITKGSHPVRYCPKCENPVEDHDLLHGEESTTVEYSLIKFTSEFDGKEIIMPMATLRPETLFGVTNAWVNPNEIYVMAKVHDEIQKLDGEDVELKYNGIWIVGKECADKLKEQDRKIEILKEIKGNELLGLKIKNPVTKKEVPLLPADFVEMGIGTGWVMSVPAHAPYDYVALRDLGKIEEVGLIPLIEIEGYDKYPAKEIVEKLGVKDQNDDELLEQATSKIYKDEFHKGKLNENCGEYAGISVKDIKEKLTKDYLNSNIAEIMYEFSEQKVVCRCGEKCIIKTVKGQWFINYSDENWKKLAHECIDNMNFAPENIRQEFHNKVDWMKDKACARKKGLGTILPFDENWIIESLSDSTIYMAYYTIARFINEGLTPEQLIPELFEYVYLGNGNVEEITKNSNISKETIEEMRKEFLYYYPLDWRCSAKDLIPNHLTFMIFNHVALFGREHWPRGIEINGYVTIEGKKLSKSKGPVLPVSEVAENFGADVARFYITTCAELPQDADVKFKEMEKARDNLIKLYELAVSVMEEEKTEKELSLIDKWLLHKTYSSINGAETAYEEFQLRKIGLMFYELINDLRWYKRRGGENNNVLKEVVEIWTKLLSPVTPHLCEEIWEKLGYAGFISQELYPEIKLEMVNEDLELGEEFIKSAMEDIRNINGVAKINPEKMYLYTADDWKYDLLEFMNENSEKNVKALIPMVMKEDKFKRHGKEVMKLINEIMKIGVKKAIAEVEILENAKTFIESEFDCEVIVNGEDVKGKKKFAIPYKPAIYME</sequence>